<feature type="chain" id="PRO_0000437925" description="C6 finger domain transcription factor nscR">
    <location>
        <begin position="1"/>
        <end position="695"/>
    </location>
</feature>
<feature type="DNA-binding region" description="Zn(2)-C6 fungal-type" evidence="1">
    <location>
        <begin position="17"/>
        <end position="43"/>
    </location>
</feature>
<feature type="region of interest" description="Disordered" evidence="2">
    <location>
        <begin position="101"/>
        <end position="146"/>
    </location>
</feature>
<feature type="compositionally biased region" description="Low complexity" evidence="2">
    <location>
        <begin position="101"/>
        <end position="113"/>
    </location>
</feature>
<evidence type="ECO:0000255" key="1">
    <source>
        <dbReference type="PROSITE-ProRule" id="PRU00227"/>
    </source>
</evidence>
<evidence type="ECO:0000256" key="2">
    <source>
        <dbReference type="SAM" id="MobiDB-lite"/>
    </source>
</evidence>
<evidence type="ECO:0000303" key="3">
    <source>
    </source>
</evidence>
<evidence type="ECO:0000305" key="4">
    <source>
    </source>
</evidence>
<reference key="1">
    <citation type="journal article" date="2012" name="MBio">
        <title>Comparative genome analysis of Trichophyton rubrum and related dermatophytes reveals candidate genes involved in infection.</title>
        <authorList>
            <person name="Martinez D.A."/>
            <person name="Oliver B.G."/>
            <person name="Graeser Y."/>
            <person name="Goldberg J.M."/>
            <person name="Li W."/>
            <person name="Martinez-Rossi N.M."/>
            <person name="Monod M."/>
            <person name="Shelest E."/>
            <person name="Barton R.C."/>
            <person name="Birch E."/>
            <person name="Brakhage A.A."/>
            <person name="Chen Z."/>
            <person name="Gurr S.J."/>
            <person name="Heiman D."/>
            <person name="Heitman J."/>
            <person name="Kosti I."/>
            <person name="Rossi A."/>
            <person name="Saif S."/>
            <person name="Samalova M."/>
            <person name="Saunders C.W."/>
            <person name="Shea T."/>
            <person name="Summerbell R.C."/>
            <person name="Xu J."/>
            <person name="Young S."/>
            <person name="Zeng Q."/>
            <person name="Birren B.W."/>
            <person name="Cuomo C.A."/>
            <person name="White T.C."/>
        </authorList>
    </citation>
    <scope>NUCLEOTIDE SEQUENCE [LARGE SCALE GENOMIC DNA]</scope>
    <source>
        <strain>ATCC MYA-4605 / CBS 113480</strain>
    </source>
</reference>
<reference key="2">
    <citation type="journal article" date="2013" name="ACS Synth. Biol.">
        <title>Discovery of cryptic polyketide metabolites from dermatophytes using heterologous expression in Aspergillus nidulans.</title>
        <authorList>
            <person name="Yin W.B."/>
            <person name="Chooi Y.H."/>
            <person name="Smith A.R."/>
            <person name="Cacho R.A."/>
            <person name="Hu Y."/>
            <person name="White T.C."/>
            <person name="Tang Y."/>
        </authorList>
    </citation>
    <scope>FUNCTION</scope>
</reference>
<reference key="3">
    <citation type="journal article" date="2013" name="Org. Lett.">
        <title>Genome mining of a prenylated and immunosuppressive polyketide from pathogenic fungi.</title>
        <authorList>
            <person name="Chooi Y.H."/>
            <person name="Fang J."/>
            <person name="Liu H."/>
            <person name="Filler S.G."/>
            <person name="Wang P."/>
            <person name="Tang Y."/>
        </authorList>
    </citation>
    <scope>FUNCTION</scope>
</reference>
<proteinExistence type="inferred from homology"/>
<comment type="function">
    <text evidence="4">Transcription factor that specifically regulates the neosartoricin B biosynthesis gene cluster (PubMed:23758576).</text>
</comment>
<comment type="subcellular location">
    <subcellularLocation>
        <location evidence="1">Nucleus</location>
    </subcellularLocation>
</comment>
<keyword id="KW-0238">DNA-binding</keyword>
<keyword id="KW-0479">Metal-binding</keyword>
<keyword id="KW-0539">Nucleus</keyword>
<keyword id="KW-1185">Reference proteome</keyword>
<keyword id="KW-0804">Transcription</keyword>
<keyword id="KW-0805">Transcription regulation</keyword>
<keyword id="KW-0862">Zinc</keyword>
<dbReference type="EMBL" id="DS995703">
    <property type="protein sequence ID" value="EEQ30783.1"/>
    <property type="molecule type" value="Genomic_DNA"/>
</dbReference>
<dbReference type="RefSeq" id="XP_002848096.1">
    <property type="nucleotide sequence ID" value="XM_002848050.1"/>
</dbReference>
<dbReference type="SMR" id="C5FM61"/>
<dbReference type="STRING" id="554155.C5FM61"/>
<dbReference type="GeneID" id="9229418"/>
<dbReference type="VEuPathDB" id="FungiDB:MCYG_03602"/>
<dbReference type="eggNOG" id="ENOG502SHJA">
    <property type="taxonomic scope" value="Eukaryota"/>
</dbReference>
<dbReference type="HOGENOM" id="CLU_004083_7_1_1"/>
<dbReference type="OMA" id="LMHTDPR"/>
<dbReference type="OrthoDB" id="435881at2759"/>
<dbReference type="Proteomes" id="UP000002035">
    <property type="component" value="Unassembled WGS sequence"/>
</dbReference>
<dbReference type="GO" id="GO:0005634">
    <property type="term" value="C:nucleus"/>
    <property type="evidence" value="ECO:0007669"/>
    <property type="project" value="UniProtKB-SubCell"/>
</dbReference>
<dbReference type="GO" id="GO:0003677">
    <property type="term" value="F:DNA binding"/>
    <property type="evidence" value="ECO:0007669"/>
    <property type="project" value="UniProtKB-KW"/>
</dbReference>
<dbReference type="GO" id="GO:0000981">
    <property type="term" value="F:DNA-binding transcription factor activity, RNA polymerase II-specific"/>
    <property type="evidence" value="ECO:0007669"/>
    <property type="project" value="InterPro"/>
</dbReference>
<dbReference type="GO" id="GO:0008270">
    <property type="term" value="F:zinc ion binding"/>
    <property type="evidence" value="ECO:0007669"/>
    <property type="project" value="InterPro"/>
</dbReference>
<dbReference type="GO" id="GO:0006351">
    <property type="term" value="P:DNA-templated transcription"/>
    <property type="evidence" value="ECO:0007669"/>
    <property type="project" value="InterPro"/>
</dbReference>
<dbReference type="CDD" id="cd12148">
    <property type="entry name" value="fungal_TF_MHR"/>
    <property type="match status" value="1"/>
</dbReference>
<dbReference type="CDD" id="cd00067">
    <property type="entry name" value="GAL4"/>
    <property type="match status" value="1"/>
</dbReference>
<dbReference type="Gene3D" id="4.10.240.10">
    <property type="entry name" value="Zn(2)-C6 fungal-type DNA-binding domain"/>
    <property type="match status" value="1"/>
</dbReference>
<dbReference type="InterPro" id="IPR050613">
    <property type="entry name" value="Sec_Metabolite_Reg"/>
</dbReference>
<dbReference type="InterPro" id="IPR007219">
    <property type="entry name" value="Transcription_factor_dom_fun"/>
</dbReference>
<dbReference type="InterPro" id="IPR036864">
    <property type="entry name" value="Zn2-C6_fun-type_DNA-bd_sf"/>
</dbReference>
<dbReference type="InterPro" id="IPR001138">
    <property type="entry name" value="Zn2Cys6_DnaBD"/>
</dbReference>
<dbReference type="PANTHER" id="PTHR31001">
    <property type="entry name" value="UNCHARACTERIZED TRANSCRIPTIONAL REGULATORY PROTEIN"/>
    <property type="match status" value="1"/>
</dbReference>
<dbReference type="PANTHER" id="PTHR31001:SF50">
    <property type="entry name" value="ZN(II)2CYS6 TRANSCRIPTION FACTOR (EUROFUNG)"/>
    <property type="match status" value="1"/>
</dbReference>
<dbReference type="Pfam" id="PF04082">
    <property type="entry name" value="Fungal_trans"/>
    <property type="match status" value="1"/>
</dbReference>
<dbReference type="Pfam" id="PF00172">
    <property type="entry name" value="Zn_clus"/>
    <property type="match status" value="1"/>
</dbReference>
<dbReference type="SMART" id="SM00066">
    <property type="entry name" value="GAL4"/>
    <property type="match status" value="1"/>
</dbReference>
<dbReference type="SUPFAM" id="SSF57701">
    <property type="entry name" value="Zn2/Cys6 DNA-binding domain"/>
    <property type="match status" value="1"/>
</dbReference>
<dbReference type="PROSITE" id="PS00463">
    <property type="entry name" value="ZN2_CY6_FUNGAL_1"/>
    <property type="match status" value="1"/>
</dbReference>
<dbReference type="PROSITE" id="PS50048">
    <property type="entry name" value="ZN2_CY6_FUNGAL_2"/>
    <property type="match status" value="1"/>
</dbReference>
<name>NSCR_ARTOC</name>
<protein>
    <recommendedName>
        <fullName evidence="3">C6 finger domain transcription factor nscR</fullName>
    </recommendedName>
    <alternativeName>
        <fullName evidence="3">Neosartiricin B biosynthesis protein R</fullName>
    </alternativeName>
</protein>
<organism>
    <name type="scientific">Arthroderma otae (strain ATCC MYA-4605 / CBS 113480)</name>
    <name type="common">Microsporum canis</name>
    <dbReference type="NCBI Taxonomy" id="554155"/>
    <lineage>
        <taxon>Eukaryota</taxon>
        <taxon>Fungi</taxon>
        <taxon>Dikarya</taxon>
        <taxon>Ascomycota</taxon>
        <taxon>Pezizomycotina</taxon>
        <taxon>Eurotiomycetes</taxon>
        <taxon>Eurotiomycetidae</taxon>
        <taxon>Onygenales</taxon>
        <taxon>Arthrodermataceae</taxon>
        <taxon>Microsporum</taxon>
    </lineage>
</organism>
<gene>
    <name evidence="3" type="primary">nscR</name>
    <name type="ORF">MCYG_03602</name>
</gene>
<sequence>MEKRNQKKRQQNAHLSCELCRERKVKCDKLDPCTNCASAGVVCVPVRRPRLPRGAHARRLRRISPEDPEASIRIDISPGAGTAADEDLKKRIRRLEALVDSMRSSASQSSNQDQESRDAIESISNETEDASAPTPDSSRMPLGDGGLRVLGLSGPSNLEIGWASIIEDKETTTQLCQVYLLNVDPVIKILHRPSVERWMLQGERYLGFPERHAAVESLGSAICYVAATSLTETQSWARFHATKSSIVARARRACEAALEKSSPLVSPEVTTLQAFVLYLVARRSEDPSRAVWTLMAFAVRIAKALDLPGGADETFFGQQMRKRLWLTICLLDFQTSLSQPSEPLISVVEATASFSPPRHINDSDFSLTTSHDIPDREGLTDTTFSMVSYHVQVAGRLLNFEPSVGDYETRQQHVQQFEQRTLRLLFYCDPESTPYAWFTWHRIQCFVSGARLSAVRPLRHPRGGSTSCMIPLTGTNESAGPLSLALNVLEKVQLVHTDPRGEGFRWFVTVPWRALAIAISECYVCQDRALMQRAWPIVEAAFQQHEAAVSGSSKAISTTLERMMCRIREKLSLTLGTSAITASPTFGITSIATTLSVPHTPPSQSSITSSGDLLSNWPWPATELSHPGPDLALVAGVAPISSSLPKLDPLLHSLDNQLVIAAQEPLVDADQSWAWEEVMASLHHDETIGADMFLS</sequence>
<accession>C5FM61</accession>